<protein>
    <recommendedName>
        <fullName>Toxin Acra I-2</fullName>
    </recommendedName>
    <alternativeName>
        <fullName>Acra1</fullName>
    </alternativeName>
</protein>
<proteinExistence type="evidence at protein level"/>
<organism>
    <name type="scientific">Androctonus crassicauda</name>
    <name type="common">Arabian fat-tailed scorpion</name>
    <dbReference type="NCBI Taxonomy" id="122909"/>
    <lineage>
        <taxon>Eukaryota</taxon>
        <taxon>Metazoa</taxon>
        <taxon>Ecdysozoa</taxon>
        <taxon>Arthropoda</taxon>
        <taxon>Chelicerata</taxon>
        <taxon>Arachnida</taxon>
        <taxon>Scorpiones</taxon>
        <taxon>Buthida</taxon>
        <taxon>Buthoidea</taxon>
        <taxon>Buthidae</taxon>
        <taxon>Androctonus</taxon>
    </lineage>
</organism>
<comment type="function">
    <text evidence="1">Probable neurotoxin that inhibits ion channels (By similarity). Is toxic to mice. Is about 2.8% of the total protein in the venom.</text>
</comment>
<comment type="subcellular location">
    <subcellularLocation>
        <location evidence="3">Secreted</location>
    </subcellularLocation>
</comment>
<comment type="tissue specificity">
    <text evidence="5">Expressed by the venom gland.</text>
</comment>
<comment type="domain">
    <text evidence="4">Has the structural arrangement of an alpha-helix connected to antiparallel beta-sheets by disulfide bonds (CS-alpha/beta).</text>
</comment>
<comment type="mass spectrometry"/>
<comment type="similarity">
    <text evidence="4">Belongs to the long (3 C-C) scorpion toxin superfamily. Sodium/Potassium channel inhibitor family.</text>
</comment>
<evidence type="ECO:0000250" key="1"/>
<evidence type="ECO:0000255" key="2">
    <source>
        <dbReference type="PROSITE-ProRule" id="PRU01210"/>
    </source>
</evidence>
<evidence type="ECO:0000269" key="3">
    <source>
    </source>
</evidence>
<evidence type="ECO:0000305" key="4"/>
<evidence type="ECO:0000305" key="5">
    <source>
    </source>
</evidence>
<sequence>MMKLALFSIIVILFSLIGSIHGADVPGNYPLDSSGNKYPCTVLGDNQSCIDVCKKHGVKYGYCYSFKCWCEFLEDKNVSI</sequence>
<keyword id="KW-0903">Direct protein sequencing</keyword>
<keyword id="KW-1015">Disulfide bond</keyword>
<keyword id="KW-0872">Ion channel impairing toxin</keyword>
<keyword id="KW-0528">Neurotoxin</keyword>
<keyword id="KW-0964">Secreted</keyword>
<keyword id="KW-0732">Signal</keyword>
<keyword id="KW-0800">Toxin</keyword>
<dbReference type="SMR" id="P0C293"/>
<dbReference type="GO" id="GO:0005576">
    <property type="term" value="C:extracellular region"/>
    <property type="evidence" value="ECO:0007669"/>
    <property type="project" value="UniProtKB-SubCell"/>
</dbReference>
<dbReference type="GO" id="GO:0019871">
    <property type="term" value="F:sodium channel inhibitor activity"/>
    <property type="evidence" value="ECO:0007669"/>
    <property type="project" value="InterPro"/>
</dbReference>
<dbReference type="GO" id="GO:0090729">
    <property type="term" value="F:toxin activity"/>
    <property type="evidence" value="ECO:0007669"/>
    <property type="project" value="UniProtKB-KW"/>
</dbReference>
<dbReference type="CDD" id="cd23106">
    <property type="entry name" value="neurotoxins_LC_scorpion"/>
    <property type="match status" value="1"/>
</dbReference>
<dbReference type="FunFam" id="3.30.30.10:FF:000008">
    <property type="entry name" value="Toxin-like peptide AaF1CA7"/>
    <property type="match status" value="1"/>
</dbReference>
<dbReference type="Gene3D" id="3.30.30.10">
    <property type="entry name" value="Knottin, scorpion toxin-like"/>
    <property type="match status" value="1"/>
</dbReference>
<dbReference type="InterPro" id="IPR044062">
    <property type="entry name" value="LCN-type_CS_alpha_beta_dom"/>
</dbReference>
<dbReference type="InterPro" id="IPR036574">
    <property type="entry name" value="Scorpion_toxin-like_sf"/>
</dbReference>
<dbReference type="InterPro" id="IPR002061">
    <property type="entry name" value="Scorpion_toxinL/defensin"/>
</dbReference>
<dbReference type="Pfam" id="PF00537">
    <property type="entry name" value="Toxin_3"/>
    <property type="match status" value="1"/>
</dbReference>
<dbReference type="SUPFAM" id="SSF57095">
    <property type="entry name" value="Scorpion toxin-like"/>
    <property type="match status" value="1"/>
</dbReference>
<dbReference type="PROSITE" id="PS51863">
    <property type="entry name" value="LCN_CSAB"/>
    <property type="match status" value="1"/>
</dbReference>
<reference key="1">
    <citation type="journal article" date="2006" name="Toxicon">
        <title>Characterization of venom components from the scorpion Androctonus crassicauda of Turkey: peptides and genes.</title>
        <authorList>
            <person name="Caliskan F."/>
            <person name="Garcia B.I."/>
            <person name="Coronas F.I.V."/>
            <person name="Batista C.V.F."/>
            <person name="Zamudio F.Z."/>
            <person name="Possani L.D."/>
        </authorList>
    </citation>
    <scope>NUCLEOTIDE SEQUENCE [MRNA]</scope>
    <scope>PROTEIN SEQUENCE OF 23-80</scope>
    <scope>MASS SPECTROMETRY</scope>
    <scope>SUBCELLULAR LOCATION</scope>
    <source>
        <tissue>Venom</tissue>
        <tissue>Venom gland</tissue>
    </source>
</reference>
<name>TX12_ANDCR</name>
<accession>P0C293</accession>
<feature type="signal peptide" evidence="3">
    <location>
        <begin position="1"/>
        <end position="22"/>
    </location>
</feature>
<feature type="chain" id="PRO_0000271320" description="Toxin Acra I-2">
    <location>
        <begin position="23"/>
        <end position="80"/>
    </location>
</feature>
<feature type="domain" description="LCN-type CS-alpha/beta" evidence="2">
    <location>
        <begin position="25"/>
        <end position="80"/>
    </location>
</feature>
<feature type="disulfide bond" evidence="2">
    <location>
        <begin position="40"/>
        <end position="63"/>
    </location>
</feature>
<feature type="disulfide bond" evidence="2">
    <location>
        <begin position="49"/>
        <end position="68"/>
    </location>
</feature>
<feature type="disulfide bond" evidence="2">
    <location>
        <begin position="53"/>
        <end position="70"/>
    </location>
</feature>